<comment type="subcellular location">
    <subcellularLocation>
        <location evidence="1">Nucleus</location>
    </subcellularLocation>
</comment>
<comment type="sequence caution" evidence="3">
    <conflict type="frameshift">
        <sequence resource="EMBL-CDS" id="CAA67304"/>
    </conflict>
</comment>
<proteinExistence type="evidence at transcript level"/>
<name>H15_DROME</name>
<reference key="1">
    <citation type="journal article" date="1996" name="Science">
        <title>Antagonistic interactions between wingless and decapentaplegic responsible for dorsal-ventral pattern in the Drosophila Leg.</title>
        <authorList>
            <person name="Brook W.J."/>
            <person name="Cohen S.M."/>
        </authorList>
    </citation>
    <scope>NUCLEOTIDE SEQUENCE [MRNA]</scope>
    <source>
        <tissue>Eye</tissue>
    </source>
</reference>
<reference key="2">
    <citation type="journal article" date="2000" name="Science">
        <title>The genome sequence of Drosophila melanogaster.</title>
        <authorList>
            <person name="Adams M.D."/>
            <person name="Celniker S.E."/>
            <person name="Holt R.A."/>
            <person name="Evans C.A."/>
            <person name="Gocayne J.D."/>
            <person name="Amanatides P.G."/>
            <person name="Scherer S.E."/>
            <person name="Li P.W."/>
            <person name="Hoskins R.A."/>
            <person name="Galle R.F."/>
            <person name="George R.A."/>
            <person name="Lewis S.E."/>
            <person name="Richards S."/>
            <person name="Ashburner M."/>
            <person name="Henderson S.N."/>
            <person name="Sutton G.G."/>
            <person name="Wortman J.R."/>
            <person name="Yandell M.D."/>
            <person name="Zhang Q."/>
            <person name="Chen L.X."/>
            <person name="Brandon R.C."/>
            <person name="Rogers Y.-H.C."/>
            <person name="Blazej R.G."/>
            <person name="Champe M."/>
            <person name="Pfeiffer B.D."/>
            <person name="Wan K.H."/>
            <person name="Doyle C."/>
            <person name="Baxter E.G."/>
            <person name="Helt G."/>
            <person name="Nelson C.R."/>
            <person name="Miklos G.L.G."/>
            <person name="Abril J.F."/>
            <person name="Agbayani A."/>
            <person name="An H.-J."/>
            <person name="Andrews-Pfannkoch C."/>
            <person name="Baldwin D."/>
            <person name="Ballew R.M."/>
            <person name="Basu A."/>
            <person name="Baxendale J."/>
            <person name="Bayraktaroglu L."/>
            <person name="Beasley E.M."/>
            <person name="Beeson K.Y."/>
            <person name="Benos P.V."/>
            <person name="Berman B.P."/>
            <person name="Bhandari D."/>
            <person name="Bolshakov S."/>
            <person name="Borkova D."/>
            <person name="Botchan M.R."/>
            <person name="Bouck J."/>
            <person name="Brokstein P."/>
            <person name="Brottier P."/>
            <person name="Burtis K.C."/>
            <person name="Busam D.A."/>
            <person name="Butler H."/>
            <person name="Cadieu E."/>
            <person name="Center A."/>
            <person name="Chandra I."/>
            <person name="Cherry J.M."/>
            <person name="Cawley S."/>
            <person name="Dahlke C."/>
            <person name="Davenport L.B."/>
            <person name="Davies P."/>
            <person name="de Pablos B."/>
            <person name="Delcher A."/>
            <person name="Deng Z."/>
            <person name="Mays A.D."/>
            <person name="Dew I."/>
            <person name="Dietz S.M."/>
            <person name="Dodson K."/>
            <person name="Doup L.E."/>
            <person name="Downes M."/>
            <person name="Dugan-Rocha S."/>
            <person name="Dunkov B.C."/>
            <person name="Dunn P."/>
            <person name="Durbin K.J."/>
            <person name="Evangelista C.C."/>
            <person name="Ferraz C."/>
            <person name="Ferriera S."/>
            <person name="Fleischmann W."/>
            <person name="Fosler C."/>
            <person name="Gabrielian A.E."/>
            <person name="Garg N.S."/>
            <person name="Gelbart W.M."/>
            <person name="Glasser K."/>
            <person name="Glodek A."/>
            <person name="Gong F."/>
            <person name="Gorrell J.H."/>
            <person name="Gu Z."/>
            <person name="Guan P."/>
            <person name="Harris M."/>
            <person name="Harris N.L."/>
            <person name="Harvey D.A."/>
            <person name="Heiman T.J."/>
            <person name="Hernandez J.R."/>
            <person name="Houck J."/>
            <person name="Hostin D."/>
            <person name="Houston K.A."/>
            <person name="Howland T.J."/>
            <person name="Wei M.-H."/>
            <person name="Ibegwam C."/>
            <person name="Jalali M."/>
            <person name="Kalush F."/>
            <person name="Karpen G.H."/>
            <person name="Ke Z."/>
            <person name="Kennison J.A."/>
            <person name="Ketchum K.A."/>
            <person name="Kimmel B.E."/>
            <person name="Kodira C.D."/>
            <person name="Kraft C.L."/>
            <person name="Kravitz S."/>
            <person name="Kulp D."/>
            <person name="Lai Z."/>
            <person name="Lasko P."/>
            <person name="Lei Y."/>
            <person name="Levitsky A.A."/>
            <person name="Li J.H."/>
            <person name="Li Z."/>
            <person name="Liang Y."/>
            <person name="Lin X."/>
            <person name="Liu X."/>
            <person name="Mattei B."/>
            <person name="McIntosh T.C."/>
            <person name="McLeod M.P."/>
            <person name="McPherson D."/>
            <person name="Merkulov G."/>
            <person name="Milshina N.V."/>
            <person name="Mobarry C."/>
            <person name="Morris J."/>
            <person name="Moshrefi A."/>
            <person name="Mount S.M."/>
            <person name="Moy M."/>
            <person name="Murphy B."/>
            <person name="Murphy L."/>
            <person name="Muzny D.M."/>
            <person name="Nelson D.L."/>
            <person name="Nelson D.R."/>
            <person name="Nelson K.A."/>
            <person name="Nixon K."/>
            <person name="Nusskern D.R."/>
            <person name="Pacleb J.M."/>
            <person name="Palazzolo M."/>
            <person name="Pittman G.S."/>
            <person name="Pan S."/>
            <person name="Pollard J."/>
            <person name="Puri V."/>
            <person name="Reese M.G."/>
            <person name="Reinert K."/>
            <person name="Remington K."/>
            <person name="Saunders R.D.C."/>
            <person name="Scheeler F."/>
            <person name="Shen H."/>
            <person name="Shue B.C."/>
            <person name="Siden-Kiamos I."/>
            <person name="Simpson M."/>
            <person name="Skupski M.P."/>
            <person name="Smith T.J."/>
            <person name="Spier E."/>
            <person name="Spradling A.C."/>
            <person name="Stapleton M."/>
            <person name="Strong R."/>
            <person name="Sun E."/>
            <person name="Svirskas R."/>
            <person name="Tector C."/>
            <person name="Turner R."/>
            <person name="Venter E."/>
            <person name="Wang A.H."/>
            <person name="Wang X."/>
            <person name="Wang Z.-Y."/>
            <person name="Wassarman D.A."/>
            <person name="Weinstock G.M."/>
            <person name="Weissenbach J."/>
            <person name="Williams S.M."/>
            <person name="Woodage T."/>
            <person name="Worley K.C."/>
            <person name="Wu D."/>
            <person name="Yang S."/>
            <person name="Yao Q.A."/>
            <person name="Ye J."/>
            <person name="Yeh R.-F."/>
            <person name="Zaveri J.S."/>
            <person name="Zhan M."/>
            <person name="Zhang G."/>
            <person name="Zhao Q."/>
            <person name="Zheng L."/>
            <person name="Zheng X.H."/>
            <person name="Zhong F.N."/>
            <person name="Zhong W."/>
            <person name="Zhou X."/>
            <person name="Zhu S.C."/>
            <person name="Zhu X."/>
            <person name="Smith H.O."/>
            <person name="Gibbs R.A."/>
            <person name="Myers E.W."/>
            <person name="Rubin G.M."/>
            <person name="Venter J.C."/>
        </authorList>
    </citation>
    <scope>NUCLEOTIDE SEQUENCE [LARGE SCALE GENOMIC DNA]</scope>
    <source>
        <strain>Berkeley</strain>
    </source>
</reference>
<reference key="3">
    <citation type="journal article" date="2002" name="Genome Biol.">
        <title>Annotation of the Drosophila melanogaster euchromatic genome: a systematic review.</title>
        <authorList>
            <person name="Misra S."/>
            <person name="Crosby M.A."/>
            <person name="Mungall C.J."/>
            <person name="Matthews B.B."/>
            <person name="Campbell K.S."/>
            <person name="Hradecky P."/>
            <person name="Huang Y."/>
            <person name="Kaminker J.S."/>
            <person name="Millburn G.H."/>
            <person name="Prochnik S.E."/>
            <person name="Smith C.D."/>
            <person name="Tupy J.L."/>
            <person name="Whitfield E.J."/>
            <person name="Bayraktaroglu L."/>
            <person name="Berman B.P."/>
            <person name="Bettencourt B.R."/>
            <person name="Celniker S.E."/>
            <person name="de Grey A.D.N.J."/>
            <person name="Drysdale R.A."/>
            <person name="Harris N.L."/>
            <person name="Richter J."/>
            <person name="Russo S."/>
            <person name="Schroeder A.J."/>
            <person name="Shu S.Q."/>
            <person name="Stapleton M."/>
            <person name="Yamada C."/>
            <person name="Ashburner M."/>
            <person name="Gelbart W.M."/>
            <person name="Rubin G.M."/>
            <person name="Lewis S.E."/>
        </authorList>
    </citation>
    <scope>GENOME REANNOTATION</scope>
    <source>
        <strain>Berkeley</strain>
    </source>
</reference>
<reference key="4">
    <citation type="submission" date="2005-08" db="EMBL/GenBank/DDBJ databases">
        <authorList>
            <person name="Stapleton M."/>
            <person name="Carlson J.W."/>
            <person name="Chavez C."/>
            <person name="Frise E."/>
            <person name="George R.A."/>
            <person name="Pacleb J.M."/>
            <person name="Park S."/>
            <person name="Wan K.H."/>
            <person name="Yu C."/>
            <person name="Celniker S.E."/>
        </authorList>
    </citation>
    <scope>NUCLEOTIDE SEQUENCE [LARGE SCALE MRNA]</scope>
    <source>
        <strain>Berkeley</strain>
    </source>
</reference>
<evidence type="ECO:0000255" key="1">
    <source>
        <dbReference type="PROSITE-ProRule" id="PRU00201"/>
    </source>
</evidence>
<evidence type="ECO:0000256" key="2">
    <source>
        <dbReference type="SAM" id="MobiDB-lite"/>
    </source>
</evidence>
<evidence type="ECO:0000305" key="3"/>
<accession>Q94890</accession>
<accession>Q9VMR3</accession>
<gene>
    <name type="primary">H15</name>
    <name type="ORF">CG6604</name>
</gene>
<protein>
    <recommendedName>
        <fullName>T-box protein H15</fullName>
    </recommendedName>
</protein>
<organism>
    <name type="scientific">Drosophila melanogaster</name>
    <name type="common">Fruit fly</name>
    <dbReference type="NCBI Taxonomy" id="7227"/>
    <lineage>
        <taxon>Eukaryota</taxon>
        <taxon>Metazoa</taxon>
        <taxon>Ecdysozoa</taxon>
        <taxon>Arthropoda</taxon>
        <taxon>Hexapoda</taxon>
        <taxon>Insecta</taxon>
        <taxon>Pterygota</taxon>
        <taxon>Neoptera</taxon>
        <taxon>Endopterygota</taxon>
        <taxon>Diptera</taxon>
        <taxon>Brachycera</taxon>
        <taxon>Muscomorpha</taxon>
        <taxon>Ephydroidea</taxon>
        <taxon>Drosophilidae</taxon>
        <taxon>Drosophila</taxon>
        <taxon>Sophophora</taxon>
    </lineage>
</organism>
<dbReference type="EMBL" id="X98766">
    <property type="protein sequence ID" value="CAA67304.1"/>
    <property type="status" value="ALT_FRAME"/>
    <property type="molecule type" value="mRNA"/>
</dbReference>
<dbReference type="EMBL" id="AE014134">
    <property type="protein sequence ID" value="AAF52249.1"/>
    <property type="molecule type" value="Genomic_DNA"/>
</dbReference>
<dbReference type="EMBL" id="BT022140">
    <property type="protein sequence ID" value="AAY51535.1"/>
    <property type="molecule type" value="mRNA"/>
</dbReference>
<dbReference type="RefSeq" id="NP_608926.2">
    <property type="nucleotide sequence ID" value="NM_135082.3"/>
</dbReference>
<dbReference type="SMR" id="Q94890"/>
<dbReference type="BioGRID" id="59938">
    <property type="interactions" value="12"/>
</dbReference>
<dbReference type="FunCoup" id="Q94890">
    <property type="interactions" value="3"/>
</dbReference>
<dbReference type="IntAct" id="Q94890">
    <property type="interactions" value="9"/>
</dbReference>
<dbReference type="STRING" id="7227.FBpp0078710"/>
<dbReference type="GlyGen" id="Q94890">
    <property type="glycosylation" value="2 sites"/>
</dbReference>
<dbReference type="PaxDb" id="7227-FBpp0078710"/>
<dbReference type="DNASU" id="33769"/>
<dbReference type="EnsemblMetazoa" id="FBtr0079076">
    <property type="protein sequence ID" value="FBpp0078710"/>
    <property type="gene ID" value="FBgn0016660"/>
</dbReference>
<dbReference type="GeneID" id="33769"/>
<dbReference type="KEGG" id="dme:Dmel_CG6604"/>
<dbReference type="AGR" id="FB:FBgn0016660"/>
<dbReference type="CTD" id="109804"/>
<dbReference type="FlyBase" id="FBgn0016660">
    <property type="gene designation" value="H15"/>
</dbReference>
<dbReference type="VEuPathDB" id="VectorBase:FBgn0016660"/>
<dbReference type="eggNOG" id="KOG3586">
    <property type="taxonomic scope" value="Eukaryota"/>
</dbReference>
<dbReference type="GeneTree" id="ENSGT00940000168440"/>
<dbReference type="HOGENOM" id="CLU_014430_9_2_1"/>
<dbReference type="InParanoid" id="Q94890"/>
<dbReference type="OMA" id="CNCDDLM"/>
<dbReference type="OrthoDB" id="7442607at2759"/>
<dbReference type="PhylomeDB" id="Q94890"/>
<dbReference type="BioGRID-ORCS" id="33769">
    <property type="hits" value="0 hits in 1 CRISPR screen"/>
</dbReference>
<dbReference type="GenomeRNAi" id="33769"/>
<dbReference type="PRO" id="PR:Q94890"/>
<dbReference type="Proteomes" id="UP000000803">
    <property type="component" value="Chromosome 2L"/>
</dbReference>
<dbReference type="Bgee" id="FBgn0016660">
    <property type="expression patterns" value="Expressed in posterior terminal follicle cell in ovary and 43 other cell types or tissues"/>
</dbReference>
<dbReference type="ExpressionAtlas" id="Q94890">
    <property type="expression patterns" value="baseline and differential"/>
</dbReference>
<dbReference type="GO" id="GO:0000785">
    <property type="term" value="C:chromatin"/>
    <property type="evidence" value="ECO:0000318"/>
    <property type="project" value="GO_Central"/>
</dbReference>
<dbReference type="GO" id="GO:0005634">
    <property type="term" value="C:nucleus"/>
    <property type="evidence" value="ECO:0000318"/>
    <property type="project" value="GO_Central"/>
</dbReference>
<dbReference type="GO" id="GO:0000981">
    <property type="term" value="F:DNA-binding transcription factor activity, RNA polymerase II-specific"/>
    <property type="evidence" value="ECO:0000318"/>
    <property type="project" value="GO_Central"/>
</dbReference>
<dbReference type="GO" id="GO:0000978">
    <property type="term" value="F:RNA polymerase II cis-regulatory region sequence-specific DNA binding"/>
    <property type="evidence" value="ECO:0000318"/>
    <property type="project" value="GO_Central"/>
</dbReference>
<dbReference type="GO" id="GO:0042684">
    <property type="term" value="P:cardioblast cell fate commitment"/>
    <property type="evidence" value="ECO:0000315"/>
    <property type="project" value="FlyBase"/>
</dbReference>
<dbReference type="GO" id="GO:0001708">
    <property type="term" value="P:cell fate specification"/>
    <property type="evidence" value="ECO:0000318"/>
    <property type="project" value="GO_Central"/>
</dbReference>
<dbReference type="GO" id="GO:0030381">
    <property type="term" value="P:chorion-containing eggshell pattern formation"/>
    <property type="evidence" value="ECO:0000315"/>
    <property type="project" value="FlyBase"/>
</dbReference>
<dbReference type="GO" id="GO:0035050">
    <property type="term" value="P:embryonic heart tube development"/>
    <property type="evidence" value="ECO:0000315"/>
    <property type="project" value="FlyBase"/>
</dbReference>
<dbReference type="GO" id="GO:0007507">
    <property type="term" value="P:heart development"/>
    <property type="evidence" value="ECO:0000315"/>
    <property type="project" value="FlyBase"/>
</dbReference>
<dbReference type="GO" id="GO:0003015">
    <property type="term" value="P:heart process"/>
    <property type="evidence" value="ECO:0000314"/>
    <property type="project" value="FlyBase"/>
</dbReference>
<dbReference type="GO" id="GO:0035223">
    <property type="term" value="P:leg disc pattern formation"/>
    <property type="evidence" value="ECO:0000316"/>
    <property type="project" value="FlyBase"/>
</dbReference>
<dbReference type="GO" id="GO:0045944">
    <property type="term" value="P:positive regulation of transcription by RNA polymerase II"/>
    <property type="evidence" value="ECO:0000314"/>
    <property type="project" value="FlyBase"/>
</dbReference>
<dbReference type="GO" id="GO:0042659">
    <property type="term" value="P:regulation of cell fate specification"/>
    <property type="evidence" value="ECO:0000316"/>
    <property type="project" value="FlyBase"/>
</dbReference>
<dbReference type="GO" id="GO:0006357">
    <property type="term" value="P:regulation of transcription by RNA polymerase II"/>
    <property type="evidence" value="ECO:0000318"/>
    <property type="project" value="GO_Central"/>
</dbReference>
<dbReference type="CDD" id="cd20193">
    <property type="entry name" value="T-box_TBX20-like"/>
    <property type="match status" value="1"/>
</dbReference>
<dbReference type="FunFam" id="2.60.40.820:FF:000008">
    <property type="entry name" value="T-box transcription factor TBX20"/>
    <property type="match status" value="1"/>
</dbReference>
<dbReference type="Gene3D" id="2.60.40.820">
    <property type="entry name" value="Transcription factor, T-box"/>
    <property type="match status" value="1"/>
</dbReference>
<dbReference type="InterPro" id="IPR008967">
    <property type="entry name" value="p53-like_TF_DNA-bd_sf"/>
</dbReference>
<dbReference type="InterPro" id="IPR046360">
    <property type="entry name" value="T-box_DNA-bd"/>
</dbReference>
<dbReference type="InterPro" id="IPR036960">
    <property type="entry name" value="T-box_sf"/>
</dbReference>
<dbReference type="InterPro" id="IPR002070">
    <property type="entry name" value="TF_Brachyury"/>
</dbReference>
<dbReference type="InterPro" id="IPR001699">
    <property type="entry name" value="TF_T-box"/>
</dbReference>
<dbReference type="InterPro" id="IPR018186">
    <property type="entry name" value="TF_T-box_CS"/>
</dbReference>
<dbReference type="PANTHER" id="PTHR11267">
    <property type="entry name" value="T-BOX PROTEIN-RELATED"/>
    <property type="match status" value="1"/>
</dbReference>
<dbReference type="PANTHER" id="PTHR11267:SF190">
    <property type="entry name" value="T-BOX TRANSCRIPTION FACTOR TBX20"/>
    <property type="match status" value="1"/>
</dbReference>
<dbReference type="Pfam" id="PF00907">
    <property type="entry name" value="T-box"/>
    <property type="match status" value="1"/>
</dbReference>
<dbReference type="PRINTS" id="PR00938">
    <property type="entry name" value="BRACHYURY"/>
</dbReference>
<dbReference type="PRINTS" id="PR00937">
    <property type="entry name" value="TBOX"/>
</dbReference>
<dbReference type="SMART" id="SM00425">
    <property type="entry name" value="TBOX"/>
    <property type="match status" value="1"/>
</dbReference>
<dbReference type="SUPFAM" id="SSF49417">
    <property type="entry name" value="p53-like transcription factors"/>
    <property type="match status" value="1"/>
</dbReference>
<dbReference type="PROSITE" id="PS01283">
    <property type="entry name" value="TBOX_1"/>
    <property type="match status" value="1"/>
</dbReference>
<dbReference type="PROSITE" id="PS50252">
    <property type="entry name" value="TBOX_3"/>
    <property type="match status" value="1"/>
</dbReference>
<sequence length="660" mass="72370">MLLSNQPANTKPQQTPSPSQTQNFKSKLQQQIVSAAAAAAANIANGSSHHHHHQNHHHHHPLNNHHNHNHNQHNISFATDFSIAAIMARGGNAPSSREPSERSLSPASVERYSGQDADDDVDVDVVDCSDSEMPSATAAAAAAATTAAAAAAALQAQQQARQALRVAQQQQQQQQQQRQQTHHHATTGKQQRQHHNHHSSNTNNSSNSGNSNTNSKSSSQRGRSAAAVGAAATPSPPPPPPSQSPEELERLSPEESPAQQPTPKIVGSCNCDDLTPVQCHLETKELWDKFHELGTEMIITKSGRRMFPTVRVSFSGPLRQIQPADRYAVLLDVVPLDSRRYRYAYHRSSWLVAGKADPPPPSRIYAHPDCPLSPEALRKQVVSFEKVKLTNNEMDKSGQVVLNSMHRYQPRIHLVRLSHGQSIPGSPKELQDMDHKTFVFPETVFTAVTAYQNQLITKLKIDSNPFAKGFRDSSRLSDFDRDPMDAFFFDQHMRTAPLRFFPDPLMSQLTPQEADAASMALLEKARQHLQMFGRSPYTEMLLPHLYQRSAAPPPPPPAPHLSAFQLGMWQQQWPQLTAGFLASANQQAALALAAAGANRTPPPSMAVAPPAPATPTSSCGSASPDLRARPQLNHYPQRFSPYQVPQHQASPPASNRAESP</sequence>
<feature type="chain" id="PRO_0000184468" description="T-box protein H15">
    <location>
        <begin position="1"/>
        <end position="660"/>
    </location>
</feature>
<feature type="DNA-binding region" description="T-box" evidence="1">
    <location>
        <begin position="286"/>
        <end position="472"/>
    </location>
</feature>
<feature type="region of interest" description="Disordered" evidence="2">
    <location>
        <begin position="1"/>
        <end position="72"/>
    </location>
</feature>
<feature type="region of interest" description="Disordered" evidence="2">
    <location>
        <begin position="90"/>
        <end position="122"/>
    </location>
</feature>
<feature type="region of interest" description="Disordered" evidence="2">
    <location>
        <begin position="169"/>
        <end position="266"/>
    </location>
</feature>
<feature type="region of interest" description="Disordered" evidence="2">
    <location>
        <begin position="598"/>
        <end position="660"/>
    </location>
</feature>
<feature type="compositionally biased region" description="Polar residues" evidence="2">
    <location>
        <begin position="1"/>
        <end position="11"/>
    </location>
</feature>
<feature type="compositionally biased region" description="Low complexity" evidence="2">
    <location>
        <begin position="12"/>
        <end position="22"/>
    </location>
</feature>
<feature type="compositionally biased region" description="Polar residues" evidence="2">
    <location>
        <begin position="23"/>
        <end position="33"/>
    </location>
</feature>
<feature type="compositionally biased region" description="Low complexity" evidence="2">
    <location>
        <begin position="35"/>
        <end position="47"/>
    </location>
</feature>
<feature type="compositionally biased region" description="Basic residues" evidence="2">
    <location>
        <begin position="48"/>
        <end position="71"/>
    </location>
</feature>
<feature type="compositionally biased region" description="Low complexity" evidence="2">
    <location>
        <begin position="93"/>
        <end position="108"/>
    </location>
</feature>
<feature type="compositionally biased region" description="Low complexity" evidence="2">
    <location>
        <begin position="169"/>
        <end position="179"/>
    </location>
</feature>
<feature type="compositionally biased region" description="Basic residues" evidence="2">
    <location>
        <begin position="180"/>
        <end position="198"/>
    </location>
</feature>
<feature type="compositionally biased region" description="Low complexity" evidence="2">
    <location>
        <begin position="199"/>
        <end position="233"/>
    </location>
</feature>
<feature type="compositionally biased region" description="Pro residues" evidence="2">
    <location>
        <begin position="234"/>
        <end position="243"/>
    </location>
</feature>
<feature type="compositionally biased region" description="Pro residues" evidence="2">
    <location>
        <begin position="600"/>
        <end position="613"/>
    </location>
</feature>
<feature type="compositionally biased region" description="Low complexity" evidence="2">
    <location>
        <begin position="614"/>
        <end position="624"/>
    </location>
</feature>
<feature type="compositionally biased region" description="Polar residues" evidence="2">
    <location>
        <begin position="643"/>
        <end position="660"/>
    </location>
</feature>
<feature type="sequence conflict" description="In Ref. 1." evidence="3" ref="1">
    <original>Q</original>
    <variation>P</variation>
    <location>
        <position position="159"/>
    </location>
</feature>
<keyword id="KW-0238">DNA-binding</keyword>
<keyword id="KW-0539">Nucleus</keyword>
<keyword id="KW-1185">Reference proteome</keyword>
<keyword id="KW-0804">Transcription</keyword>
<keyword id="KW-0805">Transcription regulation</keyword>